<accession>B5FJ16</accession>
<feature type="chain" id="PRO_1000115051" description="Small ribosomal subunit protein uS2">
    <location>
        <begin position="1"/>
        <end position="241"/>
    </location>
</feature>
<proteinExistence type="inferred from homology"/>
<protein>
    <recommendedName>
        <fullName evidence="1">Small ribosomal subunit protein uS2</fullName>
    </recommendedName>
    <alternativeName>
        <fullName evidence="2">30S ribosomal protein S2</fullName>
    </alternativeName>
</protein>
<comment type="similarity">
    <text evidence="1">Belongs to the universal ribosomal protein uS2 family.</text>
</comment>
<name>RS2_SALDC</name>
<evidence type="ECO:0000255" key="1">
    <source>
        <dbReference type="HAMAP-Rule" id="MF_00291"/>
    </source>
</evidence>
<evidence type="ECO:0000305" key="2"/>
<keyword id="KW-0687">Ribonucleoprotein</keyword>
<keyword id="KW-0689">Ribosomal protein</keyword>
<sequence length="241" mass="26759">MATVSMRDMLKAGVHFGHQTRYWNPKMKPFIFGARNKVHIINLEKTVPMFNEALAELNKISARKGKILFVGTKRAASEAVKEAANSCDQFFVNHRWLGGMLTNWKTVRQSIKRLKDLETQSQDGTFEKLTKKEALMRTRELEKLENSLGGIKDMGGLPDALFVIDADHEHIAIKEANNLGIPVFAIVDTNSDPDGVDFVIPGNDDAIRAVSLYLGAVAATVREGRSQDLASQAEESFVEAE</sequence>
<gene>
    <name evidence="1" type="primary">rpsB</name>
    <name type="ordered locus">SeD_A0238</name>
</gene>
<reference key="1">
    <citation type="journal article" date="2011" name="J. Bacteriol.">
        <title>Comparative genomics of 28 Salmonella enterica isolates: evidence for CRISPR-mediated adaptive sublineage evolution.</title>
        <authorList>
            <person name="Fricke W.F."/>
            <person name="Mammel M.K."/>
            <person name="McDermott P.F."/>
            <person name="Tartera C."/>
            <person name="White D.G."/>
            <person name="Leclerc J.E."/>
            <person name="Ravel J."/>
            <person name="Cebula T.A."/>
        </authorList>
    </citation>
    <scope>NUCLEOTIDE SEQUENCE [LARGE SCALE GENOMIC DNA]</scope>
    <source>
        <strain>CT_02021853</strain>
    </source>
</reference>
<dbReference type="EMBL" id="CP001144">
    <property type="protein sequence ID" value="ACH75431.1"/>
    <property type="molecule type" value="Genomic_DNA"/>
</dbReference>
<dbReference type="RefSeq" id="WP_000246886.1">
    <property type="nucleotide sequence ID" value="NC_011205.1"/>
</dbReference>
<dbReference type="SMR" id="B5FJ16"/>
<dbReference type="KEGG" id="sed:SeD_A0238"/>
<dbReference type="HOGENOM" id="CLU_040318_1_0_6"/>
<dbReference type="Proteomes" id="UP000008322">
    <property type="component" value="Chromosome"/>
</dbReference>
<dbReference type="GO" id="GO:0022627">
    <property type="term" value="C:cytosolic small ribosomal subunit"/>
    <property type="evidence" value="ECO:0007669"/>
    <property type="project" value="TreeGrafter"/>
</dbReference>
<dbReference type="GO" id="GO:0003735">
    <property type="term" value="F:structural constituent of ribosome"/>
    <property type="evidence" value="ECO:0007669"/>
    <property type="project" value="InterPro"/>
</dbReference>
<dbReference type="GO" id="GO:0006412">
    <property type="term" value="P:translation"/>
    <property type="evidence" value="ECO:0007669"/>
    <property type="project" value="UniProtKB-UniRule"/>
</dbReference>
<dbReference type="CDD" id="cd01425">
    <property type="entry name" value="RPS2"/>
    <property type="match status" value="1"/>
</dbReference>
<dbReference type="FunFam" id="1.10.287.610:FF:000001">
    <property type="entry name" value="30S ribosomal protein S2"/>
    <property type="match status" value="1"/>
</dbReference>
<dbReference type="Gene3D" id="3.40.50.10490">
    <property type="entry name" value="Glucose-6-phosphate isomerase like protein, domain 1"/>
    <property type="match status" value="1"/>
</dbReference>
<dbReference type="Gene3D" id="1.10.287.610">
    <property type="entry name" value="Helix hairpin bin"/>
    <property type="match status" value="1"/>
</dbReference>
<dbReference type="HAMAP" id="MF_00291_B">
    <property type="entry name" value="Ribosomal_uS2_B"/>
    <property type="match status" value="1"/>
</dbReference>
<dbReference type="InterPro" id="IPR001865">
    <property type="entry name" value="Ribosomal_uS2"/>
</dbReference>
<dbReference type="InterPro" id="IPR005706">
    <property type="entry name" value="Ribosomal_uS2_bac/mit/plastid"/>
</dbReference>
<dbReference type="InterPro" id="IPR018130">
    <property type="entry name" value="Ribosomal_uS2_CS"/>
</dbReference>
<dbReference type="InterPro" id="IPR023591">
    <property type="entry name" value="Ribosomal_uS2_flav_dom_sf"/>
</dbReference>
<dbReference type="NCBIfam" id="TIGR01011">
    <property type="entry name" value="rpsB_bact"/>
    <property type="match status" value="1"/>
</dbReference>
<dbReference type="PANTHER" id="PTHR12534">
    <property type="entry name" value="30S RIBOSOMAL PROTEIN S2 PROKARYOTIC AND ORGANELLAR"/>
    <property type="match status" value="1"/>
</dbReference>
<dbReference type="PANTHER" id="PTHR12534:SF0">
    <property type="entry name" value="SMALL RIBOSOMAL SUBUNIT PROTEIN US2M"/>
    <property type="match status" value="1"/>
</dbReference>
<dbReference type="Pfam" id="PF00318">
    <property type="entry name" value="Ribosomal_S2"/>
    <property type="match status" value="1"/>
</dbReference>
<dbReference type="PRINTS" id="PR00395">
    <property type="entry name" value="RIBOSOMALS2"/>
</dbReference>
<dbReference type="SUPFAM" id="SSF52313">
    <property type="entry name" value="Ribosomal protein S2"/>
    <property type="match status" value="1"/>
</dbReference>
<dbReference type="PROSITE" id="PS00962">
    <property type="entry name" value="RIBOSOMAL_S2_1"/>
    <property type="match status" value="1"/>
</dbReference>
<dbReference type="PROSITE" id="PS00963">
    <property type="entry name" value="RIBOSOMAL_S2_2"/>
    <property type="match status" value="1"/>
</dbReference>
<organism>
    <name type="scientific">Salmonella dublin (strain CT_02021853)</name>
    <dbReference type="NCBI Taxonomy" id="439851"/>
    <lineage>
        <taxon>Bacteria</taxon>
        <taxon>Pseudomonadati</taxon>
        <taxon>Pseudomonadota</taxon>
        <taxon>Gammaproteobacteria</taxon>
        <taxon>Enterobacterales</taxon>
        <taxon>Enterobacteriaceae</taxon>
        <taxon>Salmonella</taxon>
    </lineage>
</organism>